<protein>
    <recommendedName>
        <fullName evidence="1">Glutamyl-Q tRNA(Asp) synthetase</fullName>
        <shortName evidence="1">Glu-Q-RSs</shortName>
        <ecNumber evidence="1">6.1.1.-</ecNumber>
    </recommendedName>
</protein>
<comment type="function">
    <text evidence="1">Catalyzes the tRNA-independent activation of glutamate in presence of ATP and the subsequent transfer of glutamate onto a tRNA(Asp). Glutamate is transferred on the 2-amino-5-(4,5-dihydroxy-2-cyclopenten-1-yl) moiety of the queuosine in the wobble position of the QUC anticodon.</text>
</comment>
<comment type="cofactor">
    <cofactor evidence="1">
        <name>Zn(2+)</name>
        <dbReference type="ChEBI" id="CHEBI:29105"/>
    </cofactor>
    <text evidence="1">Binds 1 zinc ion per subunit.</text>
</comment>
<comment type="similarity">
    <text evidence="1">Belongs to the class-I aminoacyl-tRNA synthetase family. GluQ subfamily.</text>
</comment>
<comment type="sequence caution" evidence="2">
    <conflict type="erroneous initiation">
        <sequence resource="EMBL-CDS" id="ACR63341"/>
    </conflict>
</comment>
<accession>C4ZRN7</accession>
<reference key="1">
    <citation type="journal article" date="2009" name="J. Bacteriol.">
        <title>Genomic sequencing reveals regulatory mutations and recombinational events in the widely used MC4100 lineage of Escherichia coli K-12.</title>
        <authorList>
            <person name="Ferenci T."/>
            <person name="Zhou Z."/>
            <person name="Betteridge T."/>
            <person name="Ren Y."/>
            <person name="Liu Y."/>
            <person name="Feng L."/>
            <person name="Reeves P.R."/>
            <person name="Wang L."/>
        </authorList>
    </citation>
    <scope>NUCLEOTIDE SEQUENCE [LARGE SCALE GENOMIC DNA]</scope>
    <source>
        <strain>K12 / MC4100 / BW2952</strain>
    </source>
</reference>
<evidence type="ECO:0000255" key="1">
    <source>
        <dbReference type="HAMAP-Rule" id="MF_01428"/>
    </source>
</evidence>
<evidence type="ECO:0000305" key="2"/>
<sequence>MLPPYFLFKEMTDTQYIGRFAPSPSGELHFGSLIAALGSYLQARARQGRWLVRIEDIDPPREVPGAAETILRQLEHYGLHWDGDVLWQSQRHDAYREALAWLHEQGLSYYCTCTRARIQSIGGIYDGHCRVLHHGPDNAAVRIRQQHPVTQFTDQLRGIIHADEKLAREDFIIHRRDGLFAYNLAVVVDDHFQGVTEIVRGADLIEPTVRQISLYQLFGWKVPDYIHLPLALNPQGAKLSKQNHAPALPKGDPRPVLIAALQFLGQQAEAHWQDFSVEQILQSAVKNWRLTAVPESAIVNSTFSNASC</sequence>
<organism>
    <name type="scientific">Escherichia coli (strain K12 / MC4100 / BW2952)</name>
    <dbReference type="NCBI Taxonomy" id="595496"/>
    <lineage>
        <taxon>Bacteria</taxon>
        <taxon>Pseudomonadati</taxon>
        <taxon>Pseudomonadota</taxon>
        <taxon>Gammaproteobacteria</taxon>
        <taxon>Enterobacterales</taxon>
        <taxon>Enterobacteriaceae</taxon>
        <taxon>Escherichia</taxon>
    </lineage>
</organism>
<gene>
    <name evidence="1" type="primary">gluQ</name>
    <name type="ordered locus">BWG_0137</name>
</gene>
<name>GLUQ_ECOBW</name>
<feature type="chain" id="PRO_1000215270" description="Glutamyl-Q tRNA(Asp) synthetase">
    <location>
        <begin position="1"/>
        <end position="308"/>
    </location>
</feature>
<feature type="short sequence motif" description="'HIGH' region">
    <location>
        <begin position="22"/>
        <end position="32"/>
    </location>
</feature>
<feature type="short sequence motif" description="'KMSKS' region">
    <location>
        <begin position="238"/>
        <end position="242"/>
    </location>
</feature>
<feature type="binding site" evidence="1">
    <location>
        <begin position="19"/>
        <end position="23"/>
    </location>
    <ligand>
        <name>L-glutamate</name>
        <dbReference type="ChEBI" id="CHEBI:29985"/>
    </ligand>
</feature>
<feature type="binding site" evidence="1">
    <location>
        <position position="55"/>
    </location>
    <ligand>
        <name>L-glutamate</name>
        <dbReference type="ChEBI" id="CHEBI:29985"/>
    </ligand>
</feature>
<feature type="binding site" evidence="1">
    <location>
        <position position="111"/>
    </location>
    <ligand>
        <name>Zn(2+)</name>
        <dbReference type="ChEBI" id="CHEBI:29105"/>
    </ligand>
</feature>
<feature type="binding site" evidence="1">
    <location>
        <position position="113"/>
    </location>
    <ligand>
        <name>Zn(2+)</name>
        <dbReference type="ChEBI" id="CHEBI:29105"/>
    </ligand>
</feature>
<feature type="binding site" evidence="1">
    <location>
        <position position="125"/>
    </location>
    <ligand>
        <name>Zn(2+)</name>
        <dbReference type="ChEBI" id="CHEBI:29105"/>
    </ligand>
</feature>
<feature type="binding site" evidence="1">
    <location>
        <position position="129"/>
    </location>
    <ligand>
        <name>Zn(2+)</name>
        <dbReference type="ChEBI" id="CHEBI:29105"/>
    </ligand>
</feature>
<feature type="binding site" evidence="1">
    <location>
        <position position="182"/>
    </location>
    <ligand>
        <name>L-glutamate</name>
        <dbReference type="ChEBI" id="CHEBI:29985"/>
    </ligand>
</feature>
<feature type="binding site" evidence="1">
    <location>
        <position position="200"/>
    </location>
    <ligand>
        <name>L-glutamate</name>
        <dbReference type="ChEBI" id="CHEBI:29985"/>
    </ligand>
</feature>
<feature type="binding site" evidence="1">
    <location>
        <position position="241"/>
    </location>
    <ligand>
        <name>ATP</name>
        <dbReference type="ChEBI" id="CHEBI:30616"/>
    </ligand>
</feature>
<dbReference type="EC" id="6.1.1.-" evidence="1"/>
<dbReference type="EMBL" id="CP001396">
    <property type="protein sequence ID" value="ACR63341.1"/>
    <property type="status" value="ALT_INIT"/>
    <property type="molecule type" value="Genomic_DNA"/>
</dbReference>
<dbReference type="SMR" id="C4ZRN7"/>
<dbReference type="KEGG" id="ebw:BWG_0137"/>
<dbReference type="HOGENOM" id="CLU_015768_0_1_6"/>
<dbReference type="GO" id="GO:0005829">
    <property type="term" value="C:cytosol"/>
    <property type="evidence" value="ECO:0007669"/>
    <property type="project" value="TreeGrafter"/>
</dbReference>
<dbReference type="GO" id="GO:0005524">
    <property type="term" value="F:ATP binding"/>
    <property type="evidence" value="ECO:0007669"/>
    <property type="project" value="UniProtKB-KW"/>
</dbReference>
<dbReference type="GO" id="GO:0004818">
    <property type="term" value="F:glutamate-tRNA ligase activity"/>
    <property type="evidence" value="ECO:0007669"/>
    <property type="project" value="TreeGrafter"/>
</dbReference>
<dbReference type="GO" id="GO:0008270">
    <property type="term" value="F:zinc ion binding"/>
    <property type="evidence" value="ECO:0007669"/>
    <property type="project" value="UniProtKB-UniRule"/>
</dbReference>
<dbReference type="GO" id="GO:0006424">
    <property type="term" value="P:glutamyl-tRNA aminoacylation"/>
    <property type="evidence" value="ECO:0007669"/>
    <property type="project" value="InterPro"/>
</dbReference>
<dbReference type="GO" id="GO:0006400">
    <property type="term" value="P:tRNA modification"/>
    <property type="evidence" value="ECO:0007669"/>
    <property type="project" value="InterPro"/>
</dbReference>
<dbReference type="FunFam" id="3.40.50.620:FF:000093">
    <property type="entry name" value="Glutamyl-Q tRNA(Asp) synthetase"/>
    <property type="match status" value="1"/>
</dbReference>
<dbReference type="Gene3D" id="3.40.50.620">
    <property type="entry name" value="HUPs"/>
    <property type="match status" value="1"/>
</dbReference>
<dbReference type="HAMAP" id="MF_01428">
    <property type="entry name" value="Glu_Q_tRNA_synth"/>
    <property type="match status" value="1"/>
</dbReference>
<dbReference type="InterPro" id="IPR022380">
    <property type="entry name" value="Glu-Q_tRNA(Asp)_Synthase"/>
</dbReference>
<dbReference type="InterPro" id="IPR000924">
    <property type="entry name" value="Glu/Gln-tRNA-synth"/>
</dbReference>
<dbReference type="InterPro" id="IPR020058">
    <property type="entry name" value="Glu/Gln-tRNA-synth_Ib_cat-dom"/>
</dbReference>
<dbReference type="InterPro" id="IPR049940">
    <property type="entry name" value="GluQ/Sye"/>
</dbReference>
<dbReference type="InterPro" id="IPR014729">
    <property type="entry name" value="Rossmann-like_a/b/a_fold"/>
</dbReference>
<dbReference type="NCBIfam" id="NF004312">
    <property type="entry name" value="PRK05710.1-1"/>
    <property type="match status" value="1"/>
</dbReference>
<dbReference type="NCBIfam" id="NF004314">
    <property type="entry name" value="PRK05710.1-3"/>
    <property type="match status" value="1"/>
</dbReference>
<dbReference type="NCBIfam" id="TIGR03838">
    <property type="entry name" value="queuosine_YadB"/>
    <property type="match status" value="1"/>
</dbReference>
<dbReference type="PANTHER" id="PTHR43311">
    <property type="entry name" value="GLUTAMATE--TRNA LIGASE"/>
    <property type="match status" value="1"/>
</dbReference>
<dbReference type="PANTHER" id="PTHR43311:SF1">
    <property type="entry name" value="GLUTAMYL-Q TRNA(ASP) SYNTHETASE"/>
    <property type="match status" value="1"/>
</dbReference>
<dbReference type="Pfam" id="PF00749">
    <property type="entry name" value="tRNA-synt_1c"/>
    <property type="match status" value="1"/>
</dbReference>
<dbReference type="PRINTS" id="PR00987">
    <property type="entry name" value="TRNASYNTHGLU"/>
</dbReference>
<dbReference type="SUPFAM" id="SSF52374">
    <property type="entry name" value="Nucleotidylyl transferase"/>
    <property type="match status" value="1"/>
</dbReference>
<keyword id="KW-0030">Aminoacyl-tRNA synthetase</keyword>
<keyword id="KW-0067">ATP-binding</keyword>
<keyword id="KW-0436">Ligase</keyword>
<keyword id="KW-0479">Metal-binding</keyword>
<keyword id="KW-0547">Nucleotide-binding</keyword>
<keyword id="KW-0862">Zinc</keyword>
<proteinExistence type="inferred from homology"/>